<sequence length="350" mass="39167">MVRIIPMAASSIRPSLACFSDSPRFPISLLSRNLSRTLHVPQSQLFGLTSHKLLRRSVNCLGVAESGKAAQATTQDDLLTWVKNDKRRMLHVVYRVGDMDRTIKFYTECLGMKLLRKRDIPEEKYTNAFLGYGPEDSHFVIELTYNYGVDKYDIGAGFGHFGIAVDDVAKTVELVKAKGGKVSREPGPVKGGKTVIAFIEDPDGYKFELLERGPTPEPLCQVMLRVGDLDRAIKFYEKAFGMELLRTRDNPEYKYTIAMMGYGPEDKFPVLELTYNYGVTEYDKGNAYAQIAIGTDDVYKTAEAIKLFGGKITREPGPLPGISTKITACLDPDGWKSVFVDNIDFLKELE</sequence>
<gene>
    <name type="ordered locus">At1g67280</name>
    <name type="ORF">F1N21.10</name>
</gene>
<dbReference type="EC" id="4.4.1.5"/>
<dbReference type="EMBL" id="AC002130">
    <property type="protein sequence ID" value="AAG00253.1"/>
    <property type="status" value="ALT_SEQ"/>
    <property type="molecule type" value="Genomic_DNA"/>
</dbReference>
<dbReference type="EMBL" id="CP002684">
    <property type="protein sequence ID" value="AEE34621.1"/>
    <property type="molecule type" value="Genomic_DNA"/>
</dbReference>
<dbReference type="EMBL" id="CP002684">
    <property type="protein sequence ID" value="AEE34622.1"/>
    <property type="molecule type" value="Genomic_DNA"/>
</dbReference>
<dbReference type="EMBL" id="AF419551">
    <property type="protein sequence ID" value="AAL31884.1"/>
    <property type="molecule type" value="mRNA"/>
</dbReference>
<dbReference type="EMBL" id="AY079102">
    <property type="protein sequence ID" value="AAL84986.1"/>
    <property type="molecule type" value="mRNA"/>
</dbReference>
<dbReference type="EMBL" id="AY085148">
    <property type="protein sequence ID" value="AAM61701.1"/>
    <property type="molecule type" value="mRNA"/>
</dbReference>
<dbReference type="PIR" id="E96696">
    <property type="entry name" value="E96696"/>
</dbReference>
<dbReference type="RefSeq" id="NP_001077783.1">
    <molecule id="Q8W593-2"/>
    <property type="nucleotide sequence ID" value="NM_001084314.2"/>
</dbReference>
<dbReference type="RefSeq" id="NP_176896.1">
    <molecule id="Q8W593-1"/>
    <property type="nucleotide sequence ID" value="NM_105396.4"/>
</dbReference>
<dbReference type="SMR" id="Q8W593"/>
<dbReference type="BioGRID" id="28269">
    <property type="interactions" value="1"/>
</dbReference>
<dbReference type="FunCoup" id="Q8W593">
    <property type="interactions" value="3656"/>
</dbReference>
<dbReference type="STRING" id="3702.Q8W593"/>
<dbReference type="GlyGen" id="Q8W593">
    <property type="glycosylation" value="1 site"/>
</dbReference>
<dbReference type="MetOSite" id="Q8W593"/>
<dbReference type="PaxDb" id="3702-AT1G67280.1"/>
<dbReference type="ProteomicsDB" id="238435">
    <molecule id="Q8W593-1"/>
</dbReference>
<dbReference type="EnsemblPlants" id="AT1G67280.1">
    <molecule id="Q8W593-1"/>
    <property type="protein sequence ID" value="AT1G67280.1"/>
    <property type="gene ID" value="AT1G67280"/>
</dbReference>
<dbReference type="EnsemblPlants" id="AT1G67280.2">
    <molecule id="Q8W593-2"/>
    <property type="protein sequence ID" value="AT1G67280.2"/>
    <property type="gene ID" value="AT1G67280"/>
</dbReference>
<dbReference type="GeneID" id="843048"/>
<dbReference type="Gramene" id="AT1G67280.1">
    <molecule id="Q8W593-1"/>
    <property type="protein sequence ID" value="AT1G67280.1"/>
    <property type="gene ID" value="AT1G67280"/>
</dbReference>
<dbReference type="Gramene" id="AT1G67280.2">
    <molecule id="Q8W593-2"/>
    <property type="protein sequence ID" value="AT1G67280.2"/>
    <property type="gene ID" value="AT1G67280"/>
</dbReference>
<dbReference type="KEGG" id="ath:AT1G67280"/>
<dbReference type="Araport" id="AT1G67280"/>
<dbReference type="TAIR" id="AT1G67280">
    <property type="gene designation" value="ATGLYI6"/>
</dbReference>
<dbReference type="eggNOG" id="KOG2943">
    <property type="taxonomic scope" value="Eukaryota"/>
</dbReference>
<dbReference type="HOGENOM" id="CLU_030607_0_0_1"/>
<dbReference type="InParanoid" id="Q8W593"/>
<dbReference type="OMA" id="CDAECNG"/>
<dbReference type="PhylomeDB" id="Q8W593"/>
<dbReference type="BioCyc" id="ARA:AT1G67280-MONOMER"/>
<dbReference type="UniPathway" id="UPA00619">
    <property type="reaction ID" value="UER00675"/>
</dbReference>
<dbReference type="CD-CODE" id="4299E36E">
    <property type="entry name" value="Nucleolus"/>
</dbReference>
<dbReference type="PRO" id="PR:Q8W593"/>
<dbReference type="Proteomes" id="UP000006548">
    <property type="component" value="Chromosome 1"/>
</dbReference>
<dbReference type="ExpressionAtlas" id="Q8W593">
    <property type="expression patterns" value="baseline and differential"/>
</dbReference>
<dbReference type="GO" id="GO:0009507">
    <property type="term" value="C:chloroplast"/>
    <property type="evidence" value="ECO:0007005"/>
    <property type="project" value="TAIR"/>
</dbReference>
<dbReference type="GO" id="GO:0009570">
    <property type="term" value="C:chloroplast stroma"/>
    <property type="evidence" value="ECO:0007005"/>
    <property type="project" value="TAIR"/>
</dbReference>
<dbReference type="GO" id="GO:0005739">
    <property type="term" value="C:mitochondrion"/>
    <property type="evidence" value="ECO:0007005"/>
    <property type="project" value="TAIR"/>
</dbReference>
<dbReference type="GO" id="GO:0010319">
    <property type="term" value="C:stromule"/>
    <property type="evidence" value="ECO:0000314"/>
    <property type="project" value="TAIR"/>
</dbReference>
<dbReference type="GO" id="GO:0009579">
    <property type="term" value="C:thylakoid"/>
    <property type="evidence" value="ECO:0007005"/>
    <property type="project" value="TAIR"/>
</dbReference>
<dbReference type="GO" id="GO:0031977">
    <property type="term" value="C:thylakoid lumen"/>
    <property type="evidence" value="ECO:0007005"/>
    <property type="project" value="TAIR"/>
</dbReference>
<dbReference type="GO" id="GO:0004462">
    <property type="term" value="F:lactoylglutathione lyase activity"/>
    <property type="evidence" value="ECO:0000314"/>
    <property type="project" value="TAIR"/>
</dbReference>
<dbReference type="GO" id="GO:0046872">
    <property type="term" value="F:metal ion binding"/>
    <property type="evidence" value="ECO:0007669"/>
    <property type="project" value="UniProtKB-KW"/>
</dbReference>
<dbReference type="GO" id="GO:0019243">
    <property type="term" value="P:methylglyoxal catabolic process to D-lactate via S-lactoyl-glutathione"/>
    <property type="evidence" value="ECO:0000316"/>
    <property type="project" value="TAIR"/>
</dbReference>
<dbReference type="GO" id="GO:0009409">
    <property type="term" value="P:response to cold"/>
    <property type="evidence" value="ECO:0000270"/>
    <property type="project" value="TAIR"/>
</dbReference>
<dbReference type="CDD" id="cd16358">
    <property type="entry name" value="GlxI_Ni"/>
    <property type="match status" value="1"/>
</dbReference>
<dbReference type="FunFam" id="3.10.180.10:FF:000004">
    <property type="entry name" value="Lactoylglutathione lyase"/>
    <property type="match status" value="2"/>
</dbReference>
<dbReference type="Gene3D" id="3.10.180.10">
    <property type="entry name" value="2,3-Dihydroxybiphenyl 1,2-Dioxygenase, domain 1"/>
    <property type="match status" value="2"/>
</dbReference>
<dbReference type="InterPro" id="IPR029068">
    <property type="entry name" value="Glyas_Bleomycin-R_OHBP_Dase"/>
</dbReference>
<dbReference type="InterPro" id="IPR004360">
    <property type="entry name" value="Glyas_Fos-R_dOase_dom"/>
</dbReference>
<dbReference type="InterPro" id="IPR004361">
    <property type="entry name" value="Glyoxalase_1"/>
</dbReference>
<dbReference type="InterPro" id="IPR018146">
    <property type="entry name" value="Glyoxalase_1_CS"/>
</dbReference>
<dbReference type="InterPro" id="IPR037523">
    <property type="entry name" value="VOC"/>
</dbReference>
<dbReference type="NCBIfam" id="TIGR00068">
    <property type="entry name" value="glyox_I"/>
    <property type="match status" value="1"/>
</dbReference>
<dbReference type="PANTHER" id="PTHR46036">
    <property type="entry name" value="LACTOYLGLUTATHIONE LYASE"/>
    <property type="match status" value="1"/>
</dbReference>
<dbReference type="PANTHER" id="PTHR46036:SF5">
    <property type="entry name" value="LACTOYLGLUTATHIONE LYASE"/>
    <property type="match status" value="1"/>
</dbReference>
<dbReference type="Pfam" id="PF00903">
    <property type="entry name" value="Glyoxalase"/>
    <property type="match status" value="2"/>
</dbReference>
<dbReference type="SUPFAM" id="SSF54593">
    <property type="entry name" value="Glyoxalase/Bleomycin resistance protein/Dihydroxybiphenyl dioxygenase"/>
    <property type="match status" value="2"/>
</dbReference>
<dbReference type="PROSITE" id="PS00934">
    <property type="entry name" value="GLYOXALASE_I_1"/>
    <property type="match status" value="2"/>
</dbReference>
<dbReference type="PROSITE" id="PS51819">
    <property type="entry name" value="VOC"/>
    <property type="match status" value="2"/>
</dbReference>
<accession>Q8W593</accession>
<accession>A8MRZ1</accession>
<accession>Q8LEY7</accession>
<accession>Q9FYG5</accession>
<feature type="transit peptide" description="Chloroplast" evidence="3">
    <location>
        <begin position="1"/>
        <end position="61"/>
    </location>
</feature>
<feature type="chain" id="PRO_0000393414" description="Probable lactoylglutathione lyase, chloroplastic">
    <location>
        <begin position="62"/>
        <end position="350"/>
    </location>
</feature>
<feature type="domain" description="VOC 1" evidence="2">
    <location>
        <begin position="88"/>
        <end position="212"/>
    </location>
</feature>
<feature type="domain" description="VOC 2" evidence="2">
    <location>
        <begin position="218"/>
        <end position="342"/>
    </location>
</feature>
<feature type="active site" description="Proton donor/acceptor" evidence="1">
    <location>
        <position position="208"/>
    </location>
</feature>
<feature type="binding site" evidence="1">
    <location>
        <position position="91"/>
    </location>
    <ligand>
        <name>Zn(2+)</name>
        <dbReference type="ChEBI" id="CHEBI:29105"/>
    </ligand>
</feature>
<feature type="binding site" evidence="1">
    <location>
        <position position="95"/>
    </location>
    <ligand>
        <name>substrate</name>
    </ligand>
</feature>
<feature type="binding site" evidence="1">
    <location>
        <position position="142"/>
    </location>
    <ligand>
        <name>Zn(2+)</name>
        <dbReference type="ChEBI" id="CHEBI:29105"/>
    </ligand>
</feature>
<feature type="binding site" evidence="1">
    <location>
        <position position="146"/>
    </location>
    <ligand>
        <name>substrate</name>
    </ligand>
</feature>
<feature type="binding site" evidence="1">
    <location>
        <position position="160"/>
    </location>
    <ligand>
        <name>substrate</name>
    </ligand>
</feature>
<feature type="binding site" evidence="1">
    <location>
        <position position="160"/>
    </location>
    <ligand>
        <name>Zn(2+)</name>
        <dbReference type="ChEBI" id="CHEBI:29105"/>
    </ligand>
</feature>
<feature type="binding site" evidence="1">
    <location>
        <position position="208"/>
    </location>
    <ligand>
        <name>Zn(2+)</name>
        <dbReference type="ChEBI" id="CHEBI:29105"/>
    </ligand>
</feature>
<feature type="splice variant" id="VSP_038976" description="In isoform 2." evidence="4">
    <location>
        <begin position="1"/>
        <end position="88"/>
    </location>
</feature>
<feature type="sequence conflict" description="In Ref. 4; AAM61701." evidence="4" ref="4">
    <original>A</original>
    <variation>S</variation>
    <location>
        <position position="72"/>
    </location>
</feature>
<feature type="sequence conflict" description="In Ref. 4; AAM61701." evidence="4" ref="4">
    <original>A</original>
    <variation>S</variation>
    <location>
        <position position="292"/>
    </location>
</feature>
<name>LGUC_ARATH</name>
<reference key="1">
    <citation type="journal article" date="2000" name="Nature">
        <title>Sequence and analysis of chromosome 1 of the plant Arabidopsis thaliana.</title>
        <authorList>
            <person name="Theologis A."/>
            <person name="Ecker J.R."/>
            <person name="Palm C.J."/>
            <person name="Federspiel N.A."/>
            <person name="Kaul S."/>
            <person name="White O."/>
            <person name="Alonso J."/>
            <person name="Altafi H."/>
            <person name="Araujo R."/>
            <person name="Bowman C.L."/>
            <person name="Brooks S.Y."/>
            <person name="Buehler E."/>
            <person name="Chan A."/>
            <person name="Chao Q."/>
            <person name="Chen H."/>
            <person name="Cheuk R.F."/>
            <person name="Chin C.W."/>
            <person name="Chung M.K."/>
            <person name="Conn L."/>
            <person name="Conway A.B."/>
            <person name="Conway A.R."/>
            <person name="Creasy T.H."/>
            <person name="Dewar K."/>
            <person name="Dunn P."/>
            <person name="Etgu P."/>
            <person name="Feldblyum T.V."/>
            <person name="Feng J.-D."/>
            <person name="Fong B."/>
            <person name="Fujii C.Y."/>
            <person name="Gill J.E."/>
            <person name="Goldsmith A.D."/>
            <person name="Haas B."/>
            <person name="Hansen N.F."/>
            <person name="Hughes B."/>
            <person name="Huizar L."/>
            <person name="Hunter J.L."/>
            <person name="Jenkins J."/>
            <person name="Johnson-Hopson C."/>
            <person name="Khan S."/>
            <person name="Khaykin E."/>
            <person name="Kim C.J."/>
            <person name="Koo H.L."/>
            <person name="Kremenetskaia I."/>
            <person name="Kurtz D.B."/>
            <person name="Kwan A."/>
            <person name="Lam B."/>
            <person name="Langin-Hooper S."/>
            <person name="Lee A."/>
            <person name="Lee J.M."/>
            <person name="Lenz C.A."/>
            <person name="Li J.H."/>
            <person name="Li Y.-P."/>
            <person name="Lin X."/>
            <person name="Liu S.X."/>
            <person name="Liu Z.A."/>
            <person name="Luros J.S."/>
            <person name="Maiti R."/>
            <person name="Marziali A."/>
            <person name="Militscher J."/>
            <person name="Miranda M."/>
            <person name="Nguyen M."/>
            <person name="Nierman W.C."/>
            <person name="Osborne B.I."/>
            <person name="Pai G."/>
            <person name="Peterson J."/>
            <person name="Pham P.K."/>
            <person name="Rizzo M."/>
            <person name="Rooney T."/>
            <person name="Rowley D."/>
            <person name="Sakano H."/>
            <person name="Salzberg S.L."/>
            <person name="Schwartz J.R."/>
            <person name="Shinn P."/>
            <person name="Southwick A.M."/>
            <person name="Sun H."/>
            <person name="Tallon L.J."/>
            <person name="Tambunga G."/>
            <person name="Toriumi M.J."/>
            <person name="Town C.D."/>
            <person name="Utterback T."/>
            <person name="Van Aken S."/>
            <person name="Vaysberg M."/>
            <person name="Vysotskaia V.S."/>
            <person name="Walker M."/>
            <person name="Wu D."/>
            <person name="Yu G."/>
            <person name="Fraser C.M."/>
            <person name="Venter J.C."/>
            <person name="Davis R.W."/>
        </authorList>
    </citation>
    <scope>NUCLEOTIDE SEQUENCE [LARGE SCALE GENOMIC DNA]</scope>
    <source>
        <strain>cv. Columbia</strain>
    </source>
</reference>
<reference key="2">
    <citation type="journal article" date="2017" name="Plant J.">
        <title>Araport11: a complete reannotation of the Arabidopsis thaliana reference genome.</title>
        <authorList>
            <person name="Cheng C.Y."/>
            <person name="Krishnakumar V."/>
            <person name="Chan A.P."/>
            <person name="Thibaud-Nissen F."/>
            <person name="Schobel S."/>
            <person name="Town C.D."/>
        </authorList>
    </citation>
    <scope>GENOME REANNOTATION</scope>
    <source>
        <strain>cv. Columbia</strain>
    </source>
</reference>
<reference key="3">
    <citation type="journal article" date="2003" name="Science">
        <title>Empirical analysis of transcriptional activity in the Arabidopsis genome.</title>
        <authorList>
            <person name="Yamada K."/>
            <person name="Lim J."/>
            <person name="Dale J.M."/>
            <person name="Chen H."/>
            <person name="Shinn P."/>
            <person name="Palm C.J."/>
            <person name="Southwick A.M."/>
            <person name="Wu H.C."/>
            <person name="Kim C.J."/>
            <person name="Nguyen M."/>
            <person name="Pham P.K."/>
            <person name="Cheuk R.F."/>
            <person name="Karlin-Newmann G."/>
            <person name="Liu S.X."/>
            <person name="Lam B."/>
            <person name="Sakano H."/>
            <person name="Wu T."/>
            <person name="Yu G."/>
            <person name="Miranda M."/>
            <person name="Quach H.L."/>
            <person name="Tripp M."/>
            <person name="Chang C.H."/>
            <person name="Lee J.M."/>
            <person name="Toriumi M.J."/>
            <person name="Chan M.M."/>
            <person name="Tang C.C."/>
            <person name="Onodera C.S."/>
            <person name="Deng J.M."/>
            <person name="Akiyama K."/>
            <person name="Ansari Y."/>
            <person name="Arakawa T."/>
            <person name="Banh J."/>
            <person name="Banno F."/>
            <person name="Bowser L."/>
            <person name="Brooks S.Y."/>
            <person name="Carninci P."/>
            <person name="Chao Q."/>
            <person name="Choy N."/>
            <person name="Enju A."/>
            <person name="Goldsmith A.D."/>
            <person name="Gurjal M."/>
            <person name="Hansen N.F."/>
            <person name="Hayashizaki Y."/>
            <person name="Johnson-Hopson C."/>
            <person name="Hsuan V.W."/>
            <person name="Iida K."/>
            <person name="Karnes M."/>
            <person name="Khan S."/>
            <person name="Koesema E."/>
            <person name="Ishida J."/>
            <person name="Jiang P.X."/>
            <person name="Jones T."/>
            <person name="Kawai J."/>
            <person name="Kamiya A."/>
            <person name="Meyers C."/>
            <person name="Nakajima M."/>
            <person name="Narusaka M."/>
            <person name="Seki M."/>
            <person name="Sakurai T."/>
            <person name="Satou M."/>
            <person name="Tamse R."/>
            <person name="Vaysberg M."/>
            <person name="Wallender E.K."/>
            <person name="Wong C."/>
            <person name="Yamamura Y."/>
            <person name="Yuan S."/>
            <person name="Shinozaki K."/>
            <person name="Davis R.W."/>
            <person name="Theologis A."/>
            <person name="Ecker J.R."/>
        </authorList>
    </citation>
    <scope>NUCLEOTIDE SEQUENCE [LARGE SCALE MRNA] (ISOFORM 1)</scope>
    <source>
        <strain>cv. Columbia</strain>
    </source>
</reference>
<reference key="4">
    <citation type="submission" date="2002-03" db="EMBL/GenBank/DDBJ databases">
        <title>Full-length cDNA from Arabidopsis thaliana.</title>
        <authorList>
            <person name="Brover V.V."/>
            <person name="Troukhan M.E."/>
            <person name="Alexandrov N.A."/>
            <person name="Lu Y.-P."/>
            <person name="Flavell R.B."/>
            <person name="Feldmann K.A."/>
        </authorList>
    </citation>
    <scope>NUCLEOTIDE SEQUENCE [LARGE SCALE MRNA] (ISOFORM 1)</scope>
</reference>
<reference key="5">
    <citation type="journal article" date="2002" name="J. Biol. Chem.">
        <title>Proteome map of the chloroplast lumen of Arabidopsis thaliana.</title>
        <authorList>
            <person name="Schubert M."/>
            <person name="Petersson U.A."/>
            <person name="Haas B.J."/>
            <person name="Funk C."/>
            <person name="Schroeder W.P."/>
            <person name="Kieselbach T."/>
        </authorList>
    </citation>
    <scope>PROTEIN SEQUENCE OF 62-71</scope>
    <scope>SUBCELLULAR LOCATION</scope>
</reference>
<keyword id="KW-0025">Alternative splicing</keyword>
<keyword id="KW-0150">Chloroplast</keyword>
<keyword id="KW-0903">Direct protein sequencing</keyword>
<keyword id="KW-0456">Lyase</keyword>
<keyword id="KW-0479">Metal-binding</keyword>
<keyword id="KW-0934">Plastid</keyword>
<keyword id="KW-1185">Reference proteome</keyword>
<keyword id="KW-0677">Repeat</keyword>
<keyword id="KW-0809">Transit peptide</keyword>
<keyword id="KW-0862">Zinc</keyword>
<evidence type="ECO:0000250" key="1"/>
<evidence type="ECO:0000255" key="2">
    <source>
        <dbReference type="PROSITE-ProRule" id="PRU01163"/>
    </source>
</evidence>
<evidence type="ECO:0000269" key="3">
    <source>
    </source>
</evidence>
<evidence type="ECO:0000305" key="4"/>
<comment type="function">
    <text evidence="1">Catalyzes the conversion of hemimercaptal, formed from methylglyoxal and glutathione, to S-lactoylglutathione.</text>
</comment>
<comment type="catalytic activity">
    <reaction>
        <text>(R)-S-lactoylglutathione = methylglyoxal + glutathione</text>
        <dbReference type="Rhea" id="RHEA:19069"/>
        <dbReference type="ChEBI" id="CHEBI:17158"/>
        <dbReference type="ChEBI" id="CHEBI:57474"/>
        <dbReference type="ChEBI" id="CHEBI:57925"/>
        <dbReference type="EC" id="4.4.1.5"/>
    </reaction>
</comment>
<comment type="cofactor">
    <cofactor evidence="1">
        <name>Zn(2+)</name>
        <dbReference type="ChEBI" id="CHEBI:29105"/>
    </cofactor>
    <text evidence="1">Binds 1 zinc ion per subunit.</text>
</comment>
<comment type="pathway">
    <text>Secondary metabolite metabolism; methylglyoxal degradation; (R)-lactate from methylglyoxal: step 1/2.</text>
</comment>
<comment type="subcellular location">
    <subcellularLocation>
        <location evidence="3">Plastid</location>
        <location evidence="3">Chloroplast stroma</location>
    </subcellularLocation>
</comment>
<comment type="alternative products">
    <event type="alternative splicing"/>
    <isoform>
        <id>Q8W593-1</id>
        <name>1</name>
        <sequence type="displayed"/>
    </isoform>
    <isoform>
        <id>Q8W593-2</id>
        <name>2</name>
        <sequence type="described" ref="VSP_038976"/>
    </isoform>
</comment>
<comment type="similarity">
    <text evidence="4">Belongs to the glyoxalase I family.</text>
</comment>
<comment type="sequence caution" evidence="4">
    <conflict type="erroneous gene model prediction">
        <sequence resource="EMBL-CDS" id="AAG00253"/>
    </conflict>
</comment>
<organism>
    <name type="scientific">Arabidopsis thaliana</name>
    <name type="common">Mouse-ear cress</name>
    <dbReference type="NCBI Taxonomy" id="3702"/>
    <lineage>
        <taxon>Eukaryota</taxon>
        <taxon>Viridiplantae</taxon>
        <taxon>Streptophyta</taxon>
        <taxon>Embryophyta</taxon>
        <taxon>Tracheophyta</taxon>
        <taxon>Spermatophyta</taxon>
        <taxon>Magnoliopsida</taxon>
        <taxon>eudicotyledons</taxon>
        <taxon>Gunneridae</taxon>
        <taxon>Pentapetalae</taxon>
        <taxon>rosids</taxon>
        <taxon>malvids</taxon>
        <taxon>Brassicales</taxon>
        <taxon>Brassicaceae</taxon>
        <taxon>Camelineae</taxon>
        <taxon>Arabidopsis</taxon>
    </lineage>
</organism>
<proteinExistence type="evidence at protein level"/>
<protein>
    <recommendedName>
        <fullName>Probable lactoylglutathione lyase, chloroplastic</fullName>
        <ecNumber>4.4.1.5</ecNumber>
    </recommendedName>
    <alternativeName>
        <fullName>Glyoxalase I</fullName>
    </alternativeName>
</protein>